<name>LIP5_DIURU</name>
<sequence length="549" mass="58420">MKLALALSLIASVAAAPTATLANGDTITGLNAIINEAFLGIPFAEPPVGNLRFKDPVPYRGSLNGQSFTAYGPSCMQQNPEGTYEENLPKVALDLVMQSKVFQAVLPNSEDCLTINVVRPPGTKAGANLPVMLWIFGGGFEIGSPTIFPPAQMVSKSVLMGKPIIHVAVNYRLASFGFLAGPDIKAEGSSNAGLKDQRLGMQWVADNIAGFGGDPSKVTIFGESAGSMSVLCHLLWNGGDNTYKGKPLFRAGIMQSGAMVPSDPVDGTYGTQIYDTLVASTGCSSASNKLACLRGLSTQALLDATNDTPGFLSYTSLRLSYLPRPDGANITDDMYKLVRDGKYASVPVIIGDQNDEGFLFGLSSLNTTTEADAEAYLRKSFIHATDADITALKAAYPSDVTQGSPFDTGILNALTPQLKRINAVLGDLTFTLSRRYFLNHYTGGPKYSFLSKQLSGLPILGTFHANDIVWQHFLLGSGSVIYNNAFIAFATDLDPNTAGLSVQWPKSTSSSQAGDNLMQISALGLYTGKDNFRTAGYNALFADPSHFFV</sequence>
<proteinExistence type="inferred from homology"/>
<organism>
    <name type="scientific">Diutina rugosa</name>
    <name type="common">Yeast</name>
    <name type="synonym">Candida rugosa</name>
    <dbReference type="NCBI Taxonomy" id="5481"/>
    <lineage>
        <taxon>Eukaryota</taxon>
        <taxon>Fungi</taxon>
        <taxon>Dikarya</taxon>
        <taxon>Ascomycota</taxon>
        <taxon>Saccharomycotina</taxon>
        <taxon>Pichiomycetes</taxon>
        <taxon>Debaryomycetaceae</taxon>
        <taxon>Diutina</taxon>
    </lineage>
</organism>
<gene>
    <name type="primary">LIP5</name>
</gene>
<feature type="signal peptide">
    <location>
        <begin position="1"/>
        <end position="15"/>
    </location>
</feature>
<feature type="chain" id="PRO_0000008623" description="Lipase 5">
    <location>
        <begin position="16"/>
        <end position="549"/>
    </location>
</feature>
<feature type="active site" description="Acyl-ester intermediate" evidence="3">
    <location>
        <position position="224"/>
    </location>
</feature>
<feature type="active site" description="Charge relay system" evidence="1">
    <location>
        <position position="356"/>
    </location>
</feature>
<feature type="active site" description="Charge relay system" evidence="1">
    <location>
        <position position="464"/>
    </location>
</feature>
<feature type="glycosylation site" description="N-linked (GlcNAc...) asparagine" evidence="2">
    <location>
        <position position="329"/>
    </location>
</feature>
<feature type="glycosylation site" description="N-linked (GlcNAc...) asparagine" evidence="2">
    <location>
        <position position="366"/>
    </location>
</feature>
<feature type="disulfide bond" evidence="1">
    <location>
        <begin position="75"/>
        <end position="112"/>
    </location>
</feature>
<feature type="disulfide bond" evidence="1">
    <location>
        <begin position="283"/>
        <end position="292"/>
    </location>
</feature>
<evidence type="ECO:0000250" key="1"/>
<evidence type="ECO:0000255" key="2"/>
<evidence type="ECO:0000255" key="3">
    <source>
        <dbReference type="PROSITE-ProRule" id="PRU10039"/>
    </source>
</evidence>
<evidence type="ECO:0000305" key="4"/>
<reference key="1">
    <citation type="journal article" date="1993" name="Gene">
        <title>Cloning and analysis of Candida cylindracea lipase sequences.</title>
        <authorList>
            <person name="Lotti M."/>
            <person name="Grandori R."/>
            <person name="Fusetti F."/>
            <person name="Longhi S."/>
            <person name="Brocca S."/>
            <person name="Tramontano A."/>
            <person name="Alberghina L."/>
        </authorList>
    </citation>
    <scope>NUCLEOTIDE SEQUENCE [GENOMIC DNA]</scope>
    <source>
        <strain>ATCC 14830 / CBS 6330 / DSM 2031 / MS-5 / NRRL Y-17506</strain>
    </source>
</reference>
<reference key="2">
    <citation type="journal article" date="1998" name="Yeast">
        <title>Candida rugosa lipases: molecular biology and versatility in biotechnology.</title>
        <authorList>
            <person name="Benjamin S."/>
            <person name="Pandey A."/>
        </authorList>
    </citation>
    <scope>REVIEW</scope>
</reference>
<protein>
    <recommendedName>
        <fullName>Lipase 5</fullName>
        <ecNumber>3.1.1.3</ecNumber>
    </recommendedName>
</protein>
<keyword id="KW-1015">Disulfide bond</keyword>
<keyword id="KW-0325">Glycoprotein</keyword>
<keyword id="KW-0378">Hydrolase</keyword>
<keyword id="KW-0442">Lipid degradation</keyword>
<keyword id="KW-0443">Lipid metabolism</keyword>
<keyword id="KW-0732">Signal</keyword>
<comment type="catalytic activity">
    <reaction>
        <text>a triacylglycerol + H2O = a diacylglycerol + a fatty acid + H(+)</text>
        <dbReference type="Rhea" id="RHEA:12044"/>
        <dbReference type="ChEBI" id="CHEBI:15377"/>
        <dbReference type="ChEBI" id="CHEBI:15378"/>
        <dbReference type="ChEBI" id="CHEBI:17855"/>
        <dbReference type="ChEBI" id="CHEBI:18035"/>
        <dbReference type="ChEBI" id="CHEBI:28868"/>
        <dbReference type="EC" id="3.1.1.3"/>
    </reaction>
</comment>
<comment type="similarity">
    <text evidence="4">Belongs to the type-B carboxylesterase/lipase family.</text>
</comment>
<accession>P32949</accession>
<dbReference type="EC" id="3.1.1.3"/>
<dbReference type="EMBL" id="X66008">
    <property type="protein sequence ID" value="CAA46807.1"/>
    <property type="molecule type" value="Genomic_DNA"/>
</dbReference>
<dbReference type="PIR" id="JN0553">
    <property type="entry name" value="JN0553"/>
</dbReference>
<dbReference type="SMR" id="P32949"/>
<dbReference type="ESTHER" id="canru-5lipa">
    <property type="family name" value="Fungal_carboxylesterase_lipase"/>
</dbReference>
<dbReference type="GlyCosmos" id="P32949">
    <property type="glycosylation" value="2 sites, No reported glycans"/>
</dbReference>
<dbReference type="GO" id="GO:0004806">
    <property type="term" value="F:triacylglycerol lipase activity"/>
    <property type="evidence" value="ECO:0007669"/>
    <property type="project" value="UniProtKB-EC"/>
</dbReference>
<dbReference type="GO" id="GO:0016042">
    <property type="term" value="P:lipid catabolic process"/>
    <property type="evidence" value="ECO:0007669"/>
    <property type="project" value="UniProtKB-KW"/>
</dbReference>
<dbReference type="CDD" id="cd00312">
    <property type="entry name" value="Esterase_lipase"/>
    <property type="match status" value="1"/>
</dbReference>
<dbReference type="Gene3D" id="3.40.50.1820">
    <property type="entry name" value="alpha/beta hydrolase"/>
    <property type="match status" value="1"/>
</dbReference>
<dbReference type="InterPro" id="IPR029058">
    <property type="entry name" value="AB_hydrolase_fold"/>
</dbReference>
<dbReference type="InterPro" id="IPR002018">
    <property type="entry name" value="CarbesteraseB"/>
</dbReference>
<dbReference type="InterPro" id="IPR019826">
    <property type="entry name" value="Carboxylesterase_B_AS"/>
</dbReference>
<dbReference type="InterPro" id="IPR019819">
    <property type="entry name" value="Carboxylesterase_B_CS"/>
</dbReference>
<dbReference type="InterPro" id="IPR050309">
    <property type="entry name" value="Type-B_Carboxylest/Lipase"/>
</dbReference>
<dbReference type="PANTHER" id="PTHR11559">
    <property type="entry name" value="CARBOXYLESTERASE"/>
    <property type="match status" value="1"/>
</dbReference>
<dbReference type="Pfam" id="PF00135">
    <property type="entry name" value="COesterase"/>
    <property type="match status" value="1"/>
</dbReference>
<dbReference type="SUPFAM" id="SSF53474">
    <property type="entry name" value="alpha/beta-Hydrolases"/>
    <property type="match status" value="1"/>
</dbReference>
<dbReference type="PROSITE" id="PS00122">
    <property type="entry name" value="CARBOXYLESTERASE_B_1"/>
    <property type="match status" value="1"/>
</dbReference>
<dbReference type="PROSITE" id="PS00941">
    <property type="entry name" value="CARBOXYLESTERASE_B_2"/>
    <property type="match status" value="1"/>
</dbReference>